<protein>
    <recommendedName>
        <fullName>Ras-related protein Rac1</fullName>
    </recommendedName>
</protein>
<proteinExistence type="evidence at protein level"/>
<evidence type="ECO:0000250" key="1"/>
<evidence type="ECO:0000255" key="2"/>
<evidence type="ECO:0000269" key="3">
    <source>
    </source>
</evidence>
<evidence type="ECO:0000269" key="4">
    <source>
    </source>
</evidence>
<evidence type="ECO:0000269" key="5">
    <source>
    </source>
</evidence>
<evidence type="ECO:0000269" key="6">
    <source>
    </source>
</evidence>
<evidence type="ECO:0000269" key="7">
    <source>
    </source>
</evidence>
<evidence type="ECO:0000269" key="8">
    <source>
    </source>
</evidence>
<evidence type="ECO:0000269" key="9">
    <source>
    </source>
</evidence>
<evidence type="ECO:0000305" key="10"/>
<keyword id="KW-1003">Cell membrane</keyword>
<keyword id="KW-0217">Developmental protein</keyword>
<keyword id="KW-0342">GTP-binding</keyword>
<keyword id="KW-0449">Lipoprotein</keyword>
<keyword id="KW-0472">Membrane</keyword>
<keyword id="KW-0488">Methylation</keyword>
<keyword id="KW-0547">Nucleotide-binding</keyword>
<keyword id="KW-0581">Phagocytosis</keyword>
<keyword id="KW-0636">Prenylation</keyword>
<keyword id="KW-1185">Reference proteome</keyword>
<gene>
    <name type="primary">Rac1</name>
    <name type="synonym">RacA</name>
    <name type="ORF">CG2248</name>
</gene>
<dbReference type="EMBL" id="U11823">
    <property type="protein sequence ID" value="AAA62870.1"/>
    <property type="molecule type" value="mRNA"/>
</dbReference>
<dbReference type="EMBL" id="L38309">
    <property type="protein sequence ID" value="AAA67040.1"/>
    <property type="molecule type" value="mRNA"/>
</dbReference>
<dbReference type="EMBL" id="Z35642">
    <property type="protein sequence ID" value="CAA84709.1"/>
    <property type="molecule type" value="mRNA"/>
</dbReference>
<dbReference type="EMBL" id="AE014296">
    <property type="protein sequence ID" value="AAF47469.1"/>
    <property type="molecule type" value="Genomic_DNA"/>
</dbReference>
<dbReference type="EMBL" id="AY060408">
    <property type="protein sequence ID" value="AAL25447.1"/>
    <property type="molecule type" value="mRNA"/>
</dbReference>
<dbReference type="PIR" id="I45715">
    <property type="entry name" value="I45715"/>
</dbReference>
<dbReference type="PIR" id="S51718">
    <property type="entry name" value="S51718"/>
</dbReference>
<dbReference type="PIR" id="S54295">
    <property type="entry name" value="S54295"/>
</dbReference>
<dbReference type="RefSeq" id="NP_001261247.1">
    <property type="nucleotide sequence ID" value="NM_001274318.1"/>
</dbReference>
<dbReference type="RefSeq" id="NP_476950.1">
    <property type="nucleotide sequence ID" value="NM_057602.4"/>
</dbReference>
<dbReference type="SMR" id="P40792"/>
<dbReference type="BioGRID" id="63689">
    <property type="interactions" value="128"/>
</dbReference>
<dbReference type="FunCoup" id="P40792">
    <property type="interactions" value="934"/>
</dbReference>
<dbReference type="IntAct" id="P40792">
    <property type="interactions" value="10"/>
</dbReference>
<dbReference type="STRING" id="7227.FBpp0304252"/>
<dbReference type="PaxDb" id="7227-FBpp0304252"/>
<dbReference type="EnsemblMetazoa" id="FBtr0072730">
    <property type="protein sequence ID" value="FBpp0072614"/>
    <property type="gene ID" value="FBgn0010333"/>
</dbReference>
<dbReference type="EnsemblMetazoa" id="FBtr0331868">
    <property type="protein sequence ID" value="FBpp0304252"/>
    <property type="gene ID" value="FBgn0010333"/>
</dbReference>
<dbReference type="GeneID" id="38146"/>
<dbReference type="KEGG" id="dme:Dmel_CG2248"/>
<dbReference type="AGR" id="FB:FBgn0010333"/>
<dbReference type="CTD" id="5879"/>
<dbReference type="FlyBase" id="FBgn0010333">
    <property type="gene designation" value="Rac1"/>
</dbReference>
<dbReference type="VEuPathDB" id="VectorBase:FBgn0010333"/>
<dbReference type="eggNOG" id="KOG0393">
    <property type="taxonomic scope" value="Eukaryota"/>
</dbReference>
<dbReference type="GeneTree" id="ENSGT00940000155205"/>
<dbReference type="HOGENOM" id="CLU_041217_21_3_1"/>
<dbReference type="InParanoid" id="P40792"/>
<dbReference type="OMA" id="RRMAPIT"/>
<dbReference type="OrthoDB" id="8830751at2759"/>
<dbReference type="PhylomeDB" id="P40792"/>
<dbReference type="Reactome" id="R-DME-114604">
    <property type="pathway name" value="GPVI-mediated activation cascade"/>
</dbReference>
<dbReference type="Reactome" id="R-DME-1433557">
    <property type="pathway name" value="Signaling by SCF-KIT"/>
</dbReference>
<dbReference type="Reactome" id="R-DME-193648">
    <property type="pathway name" value="NRAGE signals death through JNK"/>
</dbReference>
<dbReference type="Reactome" id="R-DME-2029482">
    <property type="pathway name" value="Regulation of actin dynamics for phagocytic cup formation"/>
</dbReference>
<dbReference type="Reactome" id="R-DME-2424491">
    <property type="pathway name" value="DAP12 signaling"/>
</dbReference>
<dbReference type="Reactome" id="R-DME-2871796">
    <property type="pathway name" value="FCERI mediated MAPK activation"/>
</dbReference>
<dbReference type="Reactome" id="R-DME-350376">
    <property type="pathway name" value="Activation of RAC1:GTP by FZ:DSH complex"/>
</dbReference>
<dbReference type="Reactome" id="R-DME-389359">
    <property type="pathway name" value="CD28 dependent Vav1 pathway"/>
</dbReference>
<dbReference type="Reactome" id="R-DME-3928662">
    <property type="pathway name" value="EPHB-mediated forward signaling"/>
</dbReference>
<dbReference type="Reactome" id="R-DME-3928664">
    <property type="pathway name" value="Ephrin signaling"/>
</dbReference>
<dbReference type="Reactome" id="R-DME-3928665">
    <property type="pathway name" value="EPH-ephrin mediated repulsion of cells"/>
</dbReference>
<dbReference type="Reactome" id="R-DME-399954">
    <property type="pathway name" value="Sema3A PAK dependent Axon repulsion"/>
</dbReference>
<dbReference type="Reactome" id="R-DME-4086400">
    <property type="pathway name" value="PCP/CE pathway"/>
</dbReference>
<dbReference type="Reactome" id="R-DME-418885">
    <property type="pathway name" value="DCC mediated attractive signaling"/>
</dbReference>
<dbReference type="Reactome" id="R-DME-4420097">
    <property type="pathway name" value="VEGFA-VEGFR2 Pathway"/>
</dbReference>
<dbReference type="Reactome" id="R-DME-445144">
    <property type="pathway name" value="Signal transduction by L1"/>
</dbReference>
<dbReference type="Reactome" id="R-DME-5218920">
    <property type="pathway name" value="VEGFR2 mediated vascular permeability"/>
</dbReference>
<dbReference type="Reactome" id="R-DME-5625740">
    <property type="pathway name" value="RHO GTPases activate PKNs"/>
</dbReference>
<dbReference type="Reactome" id="R-DME-5625900">
    <property type="pathway name" value="RHO GTPases activate CIT"/>
</dbReference>
<dbReference type="Reactome" id="R-DME-5627123">
    <property type="pathway name" value="RHO GTPases activate PAKs"/>
</dbReference>
<dbReference type="Reactome" id="R-DME-5663213">
    <property type="pathway name" value="RHO GTPases Activate WASPs and WAVEs"/>
</dbReference>
<dbReference type="Reactome" id="R-DME-5687128">
    <property type="pathway name" value="MAPK6/MAPK4 signaling"/>
</dbReference>
<dbReference type="Reactome" id="R-DME-6798695">
    <property type="pathway name" value="Neutrophil degranulation"/>
</dbReference>
<dbReference type="Reactome" id="R-DME-8849471">
    <property type="pathway name" value="PTK6 Regulates RHO GTPases, RAS GTPase and MAP kinases"/>
</dbReference>
<dbReference type="Reactome" id="R-DME-9013149">
    <property type="pathway name" value="RAC1 GTPase cycle"/>
</dbReference>
<dbReference type="Reactome" id="R-DME-9013404">
    <property type="pathway name" value="RAC2 GTPase cycle"/>
</dbReference>
<dbReference type="Reactome" id="R-DME-9013407">
    <property type="pathway name" value="RHOH GTPase cycle"/>
</dbReference>
<dbReference type="Reactome" id="R-DME-9013408">
    <property type="pathway name" value="RHOG GTPase cycle"/>
</dbReference>
<dbReference type="Reactome" id="R-DME-9013423">
    <property type="pathway name" value="RAC3 GTPase cycle"/>
</dbReference>
<dbReference type="Reactome" id="R-DME-9748787">
    <property type="pathway name" value="Azathioprine ADME"/>
</dbReference>
<dbReference type="Reactome" id="R-DME-983231">
    <property type="pathway name" value="Factors involved in megakaryocyte development and platelet production"/>
</dbReference>
<dbReference type="SignaLink" id="P40792"/>
<dbReference type="BioGRID-ORCS" id="38146">
    <property type="hits" value="0 hits in 3 CRISPR screens"/>
</dbReference>
<dbReference type="ChiTaRS" id="Rac1">
    <property type="organism name" value="fly"/>
</dbReference>
<dbReference type="GenomeRNAi" id="38146"/>
<dbReference type="PRO" id="PR:P40792"/>
<dbReference type="Proteomes" id="UP000000803">
    <property type="component" value="Chromosome 3L"/>
</dbReference>
<dbReference type="Bgee" id="FBgn0010333">
    <property type="expression patterns" value="Expressed in wing disc and 248 other cell types or tissues"/>
</dbReference>
<dbReference type="ExpressionAtlas" id="P40792">
    <property type="expression patterns" value="baseline and differential"/>
</dbReference>
<dbReference type="GO" id="GO:0042995">
    <property type="term" value="C:cell projection"/>
    <property type="evidence" value="ECO:0000318"/>
    <property type="project" value="GO_Central"/>
</dbReference>
<dbReference type="GO" id="GO:0005737">
    <property type="term" value="C:cytoplasm"/>
    <property type="evidence" value="ECO:0000314"/>
    <property type="project" value="FlyBase"/>
</dbReference>
<dbReference type="GO" id="GO:0031410">
    <property type="term" value="C:cytoplasmic vesicle"/>
    <property type="evidence" value="ECO:0000318"/>
    <property type="project" value="GO_Central"/>
</dbReference>
<dbReference type="GO" id="GO:0005856">
    <property type="term" value="C:cytoskeleton"/>
    <property type="evidence" value="ECO:0000318"/>
    <property type="project" value="GO_Central"/>
</dbReference>
<dbReference type="GO" id="GO:0005829">
    <property type="term" value="C:cytosol"/>
    <property type="evidence" value="ECO:0000304"/>
    <property type="project" value="Reactome"/>
</dbReference>
<dbReference type="GO" id="GO:0005886">
    <property type="term" value="C:plasma membrane"/>
    <property type="evidence" value="ECO:0000314"/>
    <property type="project" value="FlyBase"/>
</dbReference>
<dbReference type="GO" id="GO:0016028">
    <property type="term" value="C:rhabdomere"/>
    <property type="evidence" value="ECO:0000314"/>
    <property type="project" value="FlyBase"/>
</dbReference>
<dbReference type="GO" id="GO:0001726">
    <property type="term" value="C:ruffle"/>
    <property type="evidence" value="ECO:0000314"/>
    <property type="project" value="FlyBase"/>
</dbReference>
<dbReference type="GO" id="GO:0005525">
    <property type="term" value="F:GTP binding"/>
    <property type="evidence" value="ECO:0000318"/>
    <property type="project" value="GO_Central"/>
</dbReference>
<dbReference type="GO" id="GO:0032794">
    <property type="term" value="F:GTPase activating protein binding"/>
    <property type="evidence" value="ECO:0000353"/>
    <property type="project" value="FlyBase"/>
</dbReference>
<dbReference type="GO" id="GO:0003924">
    <property type="term" value="F:GTPase activity"/>
    <property type="evidence" value="ECO:0000314"/>
    <property type="project" value="FlyBase"/>
</dbReference>
<dbReference type="GO" id="GO:0030295">
    <property type="term" value="F:protein kinase activator activity"/>
    <property type="evidence" value="ECO:0000314"/>
    <property type="project" value="FlyBase"/>
</dbReference>
<dbReference type="GO" id="GO:0019901">
    <property type="term" value="F:protein kinase binding"/>
    <property type="evidence" value="ECO:0000353"/>
    <property type="project" value="FlyBase"/>
</dbReference>
<dbReference type="GO" id="GO:0030036">
    <property type="term" value="P:actin cytoskeleton organization"/>
    <property type="evidence" value="ECO:0000315"/>
    <property type="project" value="FlyBase"/>
</dbReference>
<dbReference type="GO" id="GO:0051017">
    <property type="term" value="P:actin filament bundle assembly"/>
    <property type="evidence" value="ECO:0000315"/>
    <property type="project" value="FlyBase"/>
</dbReference>
<dbReference type="GO" id="GO:0007015">
    <property type="term" value="P:actin filament organization"/>
    <property type="evidence" value="ECO:0000315"/>
    <property type="project" value="FlyBase"/>
</dbReference>
<dbReference type="GO" id="GO:0048675">
    <property type="term" value="P:axon extension"/>
    <property type="evidence" value="ECO:0000315"/>
    <property type="project" value="FlyBase"/>
</dbReference>
<dbReference type="GO" id="GO:0007411">
    <property type="term" value="P:axon guidance"/>
    <property type="evidence" value="ECO:0000315"/>
    <property type="project" value="FlyBase"/>
</dbReference>
<dbReference type="GO" id="GO:0016199">
    <property type="term" value="P:axon midline choice point recognition"/>
    <property type="evidence" value="ECO:0000316"/>
    <property type="project" value="FlyBase"/>
</dbReference>
<dbReference type="GO" id="GO:0007413">
    <property type="term" value="P:axonal fasciculation"/>
    <property type="evidence" value="ECO:0000315"/>
    <property type="project" value="FlyBase"/>
</dbReference>
<dbReference type="GO" id="GO:0007298">
    <property type="term" value="P:border follicle cell migration"/>
    <property type="evidence" value="ECO:0000315"/>
    <property type="project" value="FlyBase"/>
</dbReference>
<dbReference type="GO" id="GO:0060326">
    <property type="term" value="P:cell chemotaxis"/>
    <property type="evidence" value="ECO:0000318"/>
    <property type="project" value="GO_Central"/>
</dbReference>
<dbReference type="GO" id="GO:0035212">
    <property type="term" value="P:cell competition in a multicellular organism"/>
    <property type="evidence" value="ECO:0000315"/>
    <property type="project" value="FlyBase"/>
</dbReference>
<dbReference type="GO" id="GO:0030031">
    <property type="term" value="P:cell projection assembly"/>
    <property type="evidence" value="ECO:0000318"/>
    <property type="project" value="GO_Central"/>
</dbReference>
<dbReference type="GO" id="GO:0030030">
    <property type="term" value="P:cell projection organization"/>
    <property type="evidence" value="ECO:0000315"/>
    <property type="project" value="FlyBase"/>
</dbReference>
<dbReference type="GO" id="GO:0036090">
    <property type="term" value="P:cleavage furrow ingression"/>
    <property type="evidence" value="ECO:0000316"/>
    <property type="project" value="FlyBase"/>
</dbReference>
<dbReference type="GO" id="GO:0030866">
    <property type="term" value="P:cortical actin cytoskeleton organization"/>
    <property type="evidence" value="ECO:0000315"/>
    <property type="project" value="FlyBase"/>
</dbReference>
<dbReference type="GO" id="GO:0030865">
    <property type="term" value="P:cortical cytoskeleton organization"/>
    <property type="evidence" value="ECO:0000318"/>
    <property type="project" value="GO_Central"/>
</dbReference>
<dbReference type="GO" id="GO:0016358">
    <property type="term" value="P:dendrite development"/>
    <property type="evidence" value="ECO:0000315"/>
    <property type="project" value="FlyBase"/>
</dbReference>
<dbReference type="GO" id="GO:0071907">
    <property type="term" value="P:determination of digestive tract left/right asymmetry"/>
    <property type="evidence" value="ECO:0000315"/>
    <property type="project" value="FlyBase"/>
</dbReference>
<dbReference type="GO" id="GO:0046843">
    <property type="term" value="P:dorsal appendage formation"/>
    <property type="evidence" value="ECO:0000315"/>
    <property type="project" value="FlyBase"/>
</dbReference>
<dbReference type="GO" id="GO:0007391">
    <property type="term" value="P:dorsal closure"/>
    <property type="evidence" value="ECO:0000315"/>
    <property type="project" value="UniProtKB"/>
</dbReference>
<dbReference type="GO" id="GO:0046664">
    <property type="term" value="P:dorsal closure, amnioserosa morphology change"/>
    <property type="evidence" value="ECO:0000315"/>
    <property type="project" value="FlyBase"/>
</dbReference>
<dbReference type="GO" id="GO:0007394">
    <property type="term" value="P:dorsal closure, elongation of leading edge cells"/>
    <property type="evidence" value="ECO:0000315"/>
    <property type="project" value="FlyBase"/>
</dbReference>
<dbReference type="GO" id="GO:0007395">
    <property type="term" value="P:dorsal closure, spreading of leading edge cells"/>
    <property type="evidence" value="ECO:0000315"/>
    <property type="project" value="FlyBase"/>
</dbReference>
<dbReference type="GO" id="GO:0048615">
    <property type="term" value="P:embryonic anterior midgut (ectodermal) morphogenesis"/>
    <property type="evidence" value="ECO:0000315"/>
    <property type="project" value="FlyBase"/>
</dbReference>
<dbReference type="GO" id="GO:0035010">
    <property type="term" value="P:encapsulation of foreign target"/>
    <property type="evidence" value="ECO:0000315"/>
    <property type="project" value="FlyBase"/>
</dbReference>
<dbReference type="GO" id="GO:0007163">
    <property type="term" value="P:establishment or maintenance of cell polarity"/>
    <property type="evidence" value="ECO:0000318"/>
    <property type="project" value="GO_Central"/>
</dbReference>
<dbReference type="GO" id="GO:0007390">
    <property type="term" value="P:germ-band shortening"/>
    <property type="evidence" value="ECO:0000315"/>
    <property type="project" value="FlyBase"/>
</dbReference>
<dbReference type="GO" id="GO:0008347">
    <property type="term" value="P:glial cell migration"/>
    <property type="evidence" value="ECO:0000315"/>
    <property type="project" value="FlyBase"/>
</dbReference>
<dbReference type="GO" id="GO:0008258">
    <property type="term" value="P:head involution"/>
    <property type="evidence" value="ECO:0000315"/>
    <property type="project" value="FlyBase"/>
</dbReference>
<dbReference type="GO" id="GO:0007516">
    <property type="term" value="P:hemocyte development"/>
    <property type="evidence" value="ECO:0000315"/>
    <property type="project" value="FlyBase"/>
</dbReference>
<dbReference type="GO" id="GO:0035099">
    <property type="term" value="P:hemocyte migration"/>
    <property type="evidence" value="ECO:0000315"/>
    <property type="project" value="FlyBase"/>
</dbReference>
<dbReference type="GO" id="GO:0035320">
    <property type="term" value="P:imaginal disc-derived wing hair site selection"/>
    <property type="evidence" value="ECO:0000315"/>
    <property type="project" value="FlyBase"/>
</dbReference>
<dbReference type="GO" id="GO:0007254">
    <property type="term" value="P:JNK cascade"/>
    <property type="evidence" value="ECO:0000315"/>
    <property type="project" value="FlyBase"/>
</dbReference>
<dbReference type="GO" id="GO:0030032">
    <property type="term" value="P:lamellipodium assembly"/>
    <property type="evidence" value="ECO:0000315"/>
    <property type="project" value="FlyBase"/>
</dbReference>
<dbReference type="GO" id="GO:0035011">
    <property type="term" value="P:melanotic encapsulation of foreign target"/>
    <property type="evidence" value="ECO:0000315"/>
    <property type="project" value="FlyBase"/>
</dbReference>
<dbReference type="GO" id="GO:0007613">
    <property type="term" value="P:memory"/>
    <property type="evidence" value="ECO:0000315"/>
    <property type="project" value="FlyBase"/>
</dbReference>
<dbReference type="GO" id="GO:0008078">
    <property type="term" value="P:mesodermal cell migration"/>
    <property type="evidence" value="ECO:0000315"/>
    <property type="project" value="FlyBase"/>
</dbReference>
<dbReference type="GO" id="GO:0008045">
    <property type="term" value="P:motor neuron axon guidance"/>
    <property type="evidence" value="ECO:0000315"/>
    <property type="project" value="FlyBase"/>
</dbReference>
<dbReference type="GO" id="GO:0016203">
    <property type="term" value="P:muscle attachment"/>
    <property type="evidence" value="ECO:0000316"/>
    <property type="project" value="FlyBase"/>
</dbReference>
<dbReference type="GO" id="GO:0055001">
    <property type="term" value="P:muscle cell development"/>
    <property type="evidence" value="ECO:0000315"/>
    <property type="project" value="FlyBase"/>
</dbReference>
<dbReference type="GO" id="GO:0007520">
    <property type="term" value="P:myoblast fusion"/>
    <property type="evidence" value="ECO:0000315"/>
    <property type="project" value="FlyBase"/>
</dbReference>
<dbReference type="GO" id="GO:0051450">
    <property type="term" value="P:myoblast proliferation"/>
    <property type="evidence" value="ECO:0000315"/>
    <property type="project" value="FlyBase"/>
</dbReference>
<dbReference type="GO" id="GO:0010593">
    <property type="term" value="P:negative regulation of lamellipodium assembly"/>
    <property type="evidence" value="ECO:0000315"/>
    <property type="project" value="FlyBase"/>
</dbReference>
<dbReference type="GO" id="GO:0110125">
    <property type="term" value="P:negative regulation of myotube cell migration"/>
    <property type="evidence" value="ECO:0000315"/>
    <property type="project" value="FlyBase"/>
</dbReference>
<dbReference type="GO" id="GO:0097206">
    <property type="term" value="P:nephrocyte filtration"/>
    <property type="evidence" value="ECO:0000315"/>
    <property type="project" value="FlyBase"/>
</dbReference>
<dbReference type="GO" id="GO:0031175">
    <property type="term" value="P:neuron projection development"/>
    <property type="evidence" value="ECO:0000315"/>
    <property type="project" value="FlyBase"/>
</dbReference>
<dbReference type="GO" id="GO:0048812">
    <property type="term" value="P:neuron projection morphogenesis"/>
    <property type="evidence" value="ECO:0000315"/>
    <property type="project" value="FlyBase"/>
</dbReference>
<dbReference type="GO" id="GO:0007424">
    <property type="term" value="P:open tracheal system development"/>
    <property type="evidence" value="ECO:0000315"/>
    <property type="project" value="FlyBase"/>
</dbReference>
<dbReference type="GO" id="GO:0007422">
    <property type="term" value="P:peripheral nervous system development"/>
    <property type="evidence" value="ECO:0000315"/>
    <property type="project" value="FlyBase"/>
</dbReference>
<dbReference type="GO" id="GO:0006911">
    <property type="term" value="P:phagocytosis, engulfment"/>
    <property type="evidence" value="ECO:0000314"/>
    <property type="project" value="FlyBase"/>
</dbReference>
<dbReference type="GO" id="GO:0045773">
    <property type="term" value="P:positive regulation of axon extension"/>
    <property type="evidence" value="ECO:0000316"/>
    <property type="project" value="FlyBase"/>
</dbReference>
<dbReference type="GO" id="GO:1902669">
    <property type="term" value="P:positive regulation of axon guidance"/>
    <property type="evidence" value="ECO:0000315"/>
    <property type="project" value="FlyBase"/>
</dbReference>
<dbReference type="GO" id="GO:1903688">
    <property type="term" value="P:positive regulation of border follicle cell migration"/>
    <property type="evidence" value="ECO:0000315"/>
    <property type="project" value="FlyBase"/>
</dbReference>
<dbReference type="GO" id="GO:0001954">
    <property type="term" value="P:positive regulation of cell-matrix adhesion"/>
    <property type="evidence" value="ECO:0000315"/>
    <property type="project" value="FlyBase"/>
</dbReference>
<dbReference type="GO" id="GO:0051491">
    <property type="term" value="P:positive regulation of filopodium assembly"/>
    <property type="evidence" value="ECO:0000315"/>
    <property type="project" value="FlyBase"/>
</dbReference>
<dbReference type="GO" id="GO:0046330">
    <property type="term" value="P:positive regulation of JNK cascade"/>
    <property type="evidence" value="ECO:0000316"/>
    <property type="project" value="FlyBase"/>
</dbReference>
<dbReference type="GO" id="GO:0071902">
    <property type="term" value="P:positive regulation of protein serine/threonine kinase activity"/>
    <property type="evidence" value="ECO:0000314"/>
    <property type="project" value="UniProtKB"/>
</dbReference>
<dbReference type="GO" id="GO:0045887">
    <property type="term" value="P:positive regulation of synaptic assembly at neuromuscular junction"/>
    <property type="evidence" value="ECO:0000316"/>
    <property type="project" value="FlyBase"/>
</dbReference>
<dbReference type="GO" id="GO:0090303">
    <property type="term" value="P:positive regulation of wound healing"/>
    <property type="evidence" value="ECO:0000316"/>
    <property type="project" value="FlyBase"/>
</dbReference>
<dbReference type="GO" id="GO:0016601">
    <property type="term" value="P:Rac protein signal transduction"/>
    <property type="evidence" value="ECO:0000318"/>
    <property type="project" value="GO_Central"/>
</dbReference>
<dbReference type="GO" id="GO:0032956">
    <property type="term" value="P:regulation of actin cytoskeleton organization"/>
    <property type="evidence" value="ECO:0000318"/>
    <property type="project" value="GO_Central"/>
</dbReference>
<dbReference type="GO" id="GO:1903391">
    <property type="term" value="P:regulation of adherens junction organization"/>
    <property type="evidence" value="ECO:0000315"/>
    <property type="project" value="FlyBase"/>
</dbReference>
<dbReference type="GO" id="GO:0050770">
    <property type="term" value="P:regulation of axonogenesis"/>
    <property type="evidence" value="ECO:0000316"/>
    <property type="project" value="FlyBase"/>
</dbReference>
<dbReference type="GO" id="GO:0008360">
    <property type="term" value="P:regulation of cell shape"/>
    <property type="evidence" value="ECO:0000318"/>
    <property type="project" value="GO_Central"/>
</dbReference>
<dbReference type="GO" id="GO:0048814">
    <property type="term" value="P:regulation of dendrite morphogenesis"/>
    <property type="evidence" value="ECO:0000315"/>
    <property type="project" value="FlyBase"/>
</dbReference>
<dbReference type="GO" id="GO:1904059">
    <property type="term" value="P:regulation of locomotor rhythm"/>
    <property type="evidence" value="ECO:0000315"/>
    <property type="project" value="FlyBase"/>
</dbReference>
<dbReference type="GO" id="GO:0051963">
    <property type="term" value="P:regulation of synapse assembly"/>
    <property type="evidence" value="ECO:0000315"/>
    <property type="project" value="FlyBase"/>
</dbReference>
<dbReference type="GO" id="GO:0050807">
    <property type="term" value="P:regulation of synapse organization"/>
    <property type="evidence" value="ECO:0000315"/>
    <property type="project" value="FlyBase"/>
</dbReference>
<dbReference type="GO" id="GO:0009611">
    <property type="term" value="P:response to wounding"/>
    <property type="evidence" value="ECO:0000315"/>
    <property type="project" value="FlyBase"/>
</dbReference>
<dbReference type="GO" id="GO:0042052">
    <property type="term" value="P:rhabdomere development"/>
    <property type="evidence" value="ECO:0000315"/>
    <property type="project" value="FlyBase"/>
</dbReference>
<dbReference type="GO" id="GO:0007435">
    <property type="term" value="P:salivary gland morphogenesis"/>
    <property type="evidence" value="ECO:0000315"/>
    <property type="project" value="FlyBase"/>
</dbReference>
<dbReference type="GO" id="GO:0050975">
    <property type="term" value="P:sensory perception of touch"/>
    <property type="evidence" value="ECO:0000315"/>
    <property type="project" value="FlyBase"/>
</dbReference>
<dbReference type="GO" id="GO:0007426">
    <property type="term" value="P:tracheal outgrowth, open tracheal system"/>
    <property type="evidence" value="ECO:0000316"/>
    <property type="project" value="FlyBase"/>
</dbReference>
<dbReference type="GO" id="GO:0048010">
    <property type="term" value="P:vascular endothelial growth factor receptor signaling pathway"/>
    <property type="evidence" value="ECO:0000315"/>
    <property type="project" value="FlyBase"/>
</dbReference>
<dbReference type="GO" id="GO:0007419">
    <property type="term" value="P:ventral cord development"/>
    <property type="evidence" value="ECO:0000315"/>
    <property type="project" value="FlyBase"/>
</dbReference>
<dbReference type="CDD" id="cd01871">
    <property type="entry name" value="Rac1_like"/>
    <property type="match status" value="1"/>
</dbReference>
<dbReference type="FunFam" id="3.40.50.300:FF:000088">
    <property type="entry name" value="Ras-related C3 botulinum toxin substrate 1"/>
    <property type="match status" value="1"/>
</dbReference>
<dbReference type="Gene3D" id="3.40.50.300">
    <property type="entry name" value="P-loop containing nucleotide triphosphate hydrolases"/>
    <property type="match status" value="1"/>
</dbReference>
<dbReference type="InterPro" id="IPR027417">
    <property type="entry name" value="P-loop_NTPase"/>
</dbReference>
<dbReference type="InterPro" id="IPR005225">
    <property type="entry name" value="Small_GTP-bd"/>
</dbReference>
<dbReference type="InterPro" id="IPR001806">
    <property type="entry name" value="Small_GTPase"/>
</dbReference>
<dbReference type="InterPro" id="IPR003578">
    <property type="entry name" value="Small_GTPase_Rho"/>
</dbReference>
<dbReference type="NCBIfam" id="TIGR00231">
    <property type="entry name" value="small_GTP"/>
    <property type="match status" value="1"/>
</dbReference>
<dbReference type="PANTHER" id="PTHR24072">
    <property type="entry name" value="RHO FAMILY GTPASE"/>
    <property type="match status" value="1"/>
</dbReference>
<dbReference type="Pfam" id="PF00071">
    <property type="entry name" value="Ras"/>
    <property type="match status" value="1"/>
</dbReference>
<dbReference type="PRINTS" id="PR00449">
    <property type="entry name" value="RASTRNSFRMNG"/>
</dbReference>
<dbReference type="SMART" id="SM00175">
    <property type="entry name" value="RAB"/>
    <property type="match status" value="1"/>
</dbReference>
<dbReference type="SMART" id="SM00176">
    <property type="entry name" value="RAN"/>
    <property type="match status" value="1"/>
</dbReference>
<dbReference type="SMART" id="SM00173">
    <property type="entry name" value="RAS"/>
    <property type="match status" value="1"/>
</dbReference>
<dbReference type="SMART" id="SM00174">
    <property type="entry name" value="RHO"/>
    <property type="match status" value="1"/>
</dbReference>
<dbReference type="SUPFAM" id="SSF52540">
    <property type="entry name" value="P-loop containing nucleoside triphosphate hydrolases"/>
    <property type="match status" value="1"/>
</dbReference>
<dbReference type="PROSITE" id="PS51420">
    <property type="entry name" value="RHO"/>
    <property type="match status" value="1"/>
</dbReference>
<name>RAC1_DROME</name>
<accession>P40792</accession>
<accession>Q9W0H7</accession>
<sequence>MQAIKCVVVGDGAVGKTCLLISYTTNAFPGEYIPTVFDNYSANVMVDAKPINLGLWDTAGQEDYDRLRPLSYPQTDVFLICFSLVNPASFENVRAKWYPEVRHHCPSTPIILVGTKLDLRDDKNTIEKLRDKKLAPITYPQGLAMAKEIGAVKYLECSALTQKGLKTVFDEAIRSVLCPVLQPKSKRKCALL</sequence>
<comment type="function">
    <text evidence="3 6 7 8">During various developmental processes, regulates changes in cell morphology in response to extracellular signals (PubMed:10323867, PubMed:24855950, PubMed:7958857). During oogenesis, mediates signaling from the tyrosine kinase (RTK) chemoattractant receptors (Egfr and Pvr) to the guidance pathway that control the directional persistent collective migration of the border cell (BC) cluster through the nurse cells to the oocyte. Once activating by Pvr and Egfr, promotes the formation of forward-directed actin protrusions which stabilize the DE-cadherin (shg)-mediated adhesions. In turn, DE-mediated adhesion between the leader border cells and nurse cells further promotes Rac1 signaling creating a positive feedback loop that amplifies the output of RTK activity and leads to higher Rac activity at the front, thus promoting polarization of the border cell cluster and directionally persistent migration (PubMed:24855950). Involved in axon outgrowth and myoblast fusion (PubMed:7958857). Plays a role in regulating dorsal closure during embryogenesis (PubMed:10323867). Involved in integrin alpha-PS3/beta-nu-mediated phagocytosis of Gram-positive S.aureus by hemocytes (PubMed:22547074).</text>
</comment>
<comment type="subunit">
    <text evidence="3 4 5 9">Interacts with Cyfip. Interacts (via REM 1 repeats) with Pkn (via N-terminus). When GTP-bound, interacts with Pak (PubMed:8628256).</text>
</comment>
<comment type="interaction">
    <interactant intactId="EBI-74845">
        <id>P40792</id>
    </interactant>
    <interactant intactId="EBI-156199">
        <id>P25843</id>
        <label>chic</label>
    </interactant>
    <organismsDiffer>false</organismsDiffer>
    <experiments>3</experiments>
</comment>
<comment type="interaction">
    <interactant intactId="EBI-74845">
        <id>P40792</id>
    </interactant>
    <interactant intactId="EBI-74826">
        <id>Q9VI13</id>
        <label>Pak</label>
    </interactant>
    <organismsDiffer>false</organismsDiffer>
    <experiments>3</experiments>
</comment>
<comment type="subcellular location">
    <subcellularLocation>
        <location evidence="10">Cell membrane</location>
        <topology evidence="10">Lipid-anchor</topology>
        <orientation evidence="10">Cytoplasmic side</orientation>
    </subcellularLocation>
</comment>
<comment type="tissue specificity">
    <text evidence="7">Detected in oocyte border cells (BC), with increased expression at the front of the BC cluster.</text>
</comment>
<comment type="similarity">
    <text evidence="10">Belongs to the small GTPase superfamily. Rho family.</text>
</comment>
<feature type="chain" id="PRO_0000198893" description="Ras-related protein Rac1">
    <location>
        <begin position="1"/>
        <end position="189"/>
    </location>
</feature>
<feature type="propeptide" id="PRO_0000281244" description="Removed in mature form" evidence="1">
    <location>
        <begin position="190"/>
        <end position="192"/>
    </location>
</feature>
<feature type="short sequence motif" description="Effector region" evidence="2">
    <location>
        <begin position="32"/>
        <end position="40"/>
    </location>
</feature>
<feature type="binding site" evidence="1">
    <location>
        <begin position="10"/>
        <end position="17"/>
    </location>
    <ligand>
        <name>GTP</name>
        <dbReference type="ChEBI" id="CHEBI:37565"/>
    </ligand>
</feature>
<feature type="binding site" evidence="1">
    <location>
        <begin position="57"/>
        <end position="61"/>
    </location>
    <ligand>
        <name>GTP</name>
        <dbReference type="ChEBI" id="CHEBI:37565"/>
    </ligand>
</feature>
<feature type="binding site" evidence="1">
    <location>
        <begin position="115"/>
        <end position="118"/>
    </location>
    <ligand>
        <name>GTP</name>
        <dbReference type="ChEBI" id="CHEBI:37565"/>
    </ligand>
</feature>
<feature type="modified residue" description="Cysteine methyl ester" evidence="1">
    <location>
        <position position="189"/>
    </location>
</feature>
<feature type="lipid moiety-binding region" description="S-geranylgeranyl cysteine" evidence="1">
    <location>
        <position position="189"/>
    </location>
</feature>
<feature type="sequence conflict" description="In Ref. 1; AAA62870." evidence="10" ref="1">
    <original>A</original>
    <variation>V</variation>
    <location>
        <position position="135"/>
    </location>
</feature>
<feature type="sequence conflict" description="In Ref. 2; AAA67040." evidence="10" ref="2">
    <original>LAMA</original>
    <variation>SGHG</variation>
    <location>
        <begin position="143"/>
        <end position="146"/>
    </location>
</feature>
<organism>
    <name type="scientific">Drosophila melanogaster</name>
    <name type="common">Fruit fly</name>
    <dbReference type="NCBI Taxonomy" id="7227"/>
    <lineage>
        <taxon>Eukaryota</taxon>
        <taxon>Metazoa</taxon>
        <taxon>Ecdysozoa</taxon>
        <taxon>Arthropoda</taxon>
        <taxon>Hexapoda</taxon>
        <taxon>Insecta</taxon>
        <taxon>Pterygota</taxon>
        <taxon>Neoptera</taxon>
        <taxon>Endopterygota</taxon>
        <taxon>Diptera</taxon>
        <taxon>Brachycera</taxon>
        <taxon>Muscomorpha</taxon>
        <taxon>Ephydroidea</taxon>
        <taxon>Drosophilidae</taxon>
        <taxon>Drosophila</taxon>
        <taxon>Sophophora</taxon>
    </lineage>
</organism>
<reference key="1">
    <citation type="journal article" date="1994" name="Genes Dev.">
        <title>Distinct morphogenetic functions of similar small GTPases: Drosophila Drac1 is involved in axonal outgrowth and myoblast fusion.</title>
        <authorList>
            <person name="Luo L."/>
            <person name="Liao Y.J."/>
            <person name="Jan L.Y."/>
            <person name="Jan Y."/>
        </authorList>
    </citation>
    <scope>NUCLEOTIDE SEQUENCE [MRNA]</scope>
    <scope>FUNCTION</scope>
    <source>
        <strain>Oregon-R</strain>
    </source>
</reference>
<reference key="2">
    <citation type="journal article" date="1995" name="EMBO J.">
        <title>Characterization of rho GTPase family homologues in Drosophila melanogaster: overexpressing Rho1 in retinal cells causes a late developmental defect.</title>
        <authorList>
            <person name="Hariharan I.K."/>
            <person name="Hu K.-Q."/>
            <person name="Asha H."/>
            <person name="Quintanilla A."/>
            <person name="Ezzell R.M."/>
            <person name="Settleman J."/>
        </authorList>
    </citation>
    <scope>NUCLEOTIDE SEQUENCE [MRNA]</scope>
</reference>
<reference key="3">
    <citation type="journal article" date="1995" name="Development">
        <title>A dominant inhibitory version of the small GTP-binding protein Rac disrupts cytoskeletal structures and inhibits developmental cell shape changes in Drosophila.</title>
        <authorList>
            <person name="Harden N."/>
            <person name="Loh H."/>
            <person name="Chia W."/>
            <person name="Lim L."/>
        </authorList>
    </citation>
    <scope>NUCLEOTIDE SEQUENCE [MRNA]</scope>
    <source>
        <strain>Canton-S</strain>
    </source>
</reference>
<reference key="4">
    <citation type="journal article" date="2000" name="Science">
        <title>The genome sequence of Drosophila melanogaster.</title>
        <authorList>
            <person name="Adams M.D."/>
            <person name="Celniker S.E."/>
            <person name="Holt R.A."/>
            <person name="Evans C.A."/>
            <person name="Gocayne J.D."/>
            <person name="Amanatides P.G."/>
            <person name="Scherer S.E."/>
            <person name="Li P.W."/>
            <person name="Hoskins R.A."/>
            <person name="Galle R.F."/>
            <person name="George R.A."/>
            <person name="Lewis S.E."/>
            <person name="Richards S."/>
            <person name="Ashburner M."/>
            <person name="Henderson S.N."/>
            <person name="Sutton G.G."/>
            <person name="Wortman J.R."/>
            <person name="Yandell M.D."/>
            <person name="Zhang Q."/>
            <person name="Chen L.X."/>
            <person name="Brandon R.C."/>
            <person name="Rogers Y.-H.C."/>
            <person name="Blazej R.G."/>
            <person name="Champe M."/>
            <person name="Pfeiffer B.D."/>
            <person name="Wan K.H."/>
            <person name="Doyle C."/>
            <person name="Baxter E.G."/>
            <person name="Helt G."/>
            <person name="Nelson C.R."/>
            <person name="Miklos G.L.G."/>
            <person name="Abril J.F."/>
            <person name="Agbayani A."/>
            <person name="An H.-J."/>
            <person name="Andrews-Pfannkoch C."/>
            <person name="Baldwin D."/>
            <person name="Ballew R.M."/>
            <person name="Basu A."/>
            <person name="Baxendale J."/>
            <person name="Bayraktaroglu L."/>
            <person name="Beasley E.M."/>
            <person name="Beeson K.Y."/>
            <person name="Benos P.V."/>
            <person name="Berman B.P."/>
            <person name="Bhandari D."/>
            <person name="Bolshakov S."/>
            <person name="Borkova D."/>
            <person name="Botchan M.R."/>
            <person name="Bouck J."/>
            <person name="Brokstein P."/>
            <person name="Brottier P."/>
            <person name="Burtis K.C."/>
            <person name="Busam D.A."/>
            <person name="Butler H."/>
            <person name="Cadieu E."/>
            <person name="Center A."/>
            <person name="Chandra I."/>
            <person name="Cherry J.M."/>
            <person name="Cawley S."/>
            <person name="Dahlke C."/>
            <person name="Davenport L.B."/>
            <person name="Davies P."/>
            <person name="de Pablos B."/>
            <person name="Delcher A."/>
            <person name="Deng Z."/>
            <person name="Mays A.D."/>
            <person name="Dew I."/>
            <person name="Dietz S.M."/>
            <person name="Dodson K."/>
            <person name="Doup L.E."/>
            <person name="Downes M."/>
            <person name="Dugan-Rocha S."/>
            <person name="Dunkov B.C."/>
            <person name="Dunn P."/>
            <person name="Durbin K.J."/>
            <person name="Evangelista C.C."/>
            <person name="Ferraz C."/>
            <person name="Ferriera S."/>
            <person name="Fleischmann W."/>
            <person name="Fosler C."/>
            <person name="Gabrielian A.E."/>
            <person name="Garg N.S."/>
            <person name="Gelbart W.M."/>
            <person name="Glasser K."/>
            <person name="Glodek A."/>
            <person name="Gong F."/>
            <person name="Gorrell J.H."/>
            <person name="Gu Z."/>
            <person name="Guan P."/>
            <person name="Harris M."/>
            <person name="Harris N.L."/>
            <person name="Harvey D.A."/>
            <person name="Heiman T.J."/>
            <person name="Hernandez J.R."/>
            <person name="Houck J."/>
            <person name="Hostin D."/>
            <person name="Houston K.A."/>
            <person name="Howland T.J."/>
            <person name="Wei M.-H."/>
            <person name="Ibegwam C."/>
            <person name="Jalali M."/>
            <person name="Kalush F."/>
            <person name="Karpen G.H."/>
            <person name="Ke Z."/>
            <person name="Kennison J.A."/>
            <person name="Ketchum K.A."/>
            <person name="Kimmel B.E."/>
            <person name="Kodira C.D."/>
            <person name="Kraft C.L."/>
            <person name="Kravitz S."/>
            <person name="Kulp D."/>
            <person name="Lai Z."/>
            <person name="Lasko P."/>
            <person name="Lei Y."/>
            <person name="Levitsky A.A."/>
            <person name="Li J.H."/>
            <person name="Li Z."/>
            <person name="Liang Y."/>
            <person name="Lin X."/>
            <person name="Liu X."/>
            <person name="Mattei B."/>
            <person name="McIntosh T.C."/>
            <person name="McLeod M.P."/>
            <person name="McPherson D."/>
            <person name="Merkulov G."/>
            <person name="Milshina N.V."/>
            <person name="Mobarry C."/>
            <person name="Morris J."/>
            <person name="Moshrefi A."/>
            <person name="Mount S.M."/>
            <person name="Moy M."/>
            <person name="Murphy B."/>
            <person name="Murphy L."/>
            <person name="Muzny D.M."/>
            <person name="Nelson D.L."/>
            <person name="Nelson D.R."/>
            <person name="Nelson K.A."/>
            <person name="Nixon K."/>
            <person name="Nusskern D.R."/>
            <person name="Pacleb J.M."/>
            <person name="Palazzolo M."/>
            <person name="Pittman G.S."/>
            <person name="Pan S."/>
            <person name="Pollard J."/>
            <person name="Puri V."/>
            <person name="Reese M.G."/>
            <person name="Reinert K."/>
            <person name="Remington K."/>
            <person name="Saunders R.D.C."/>
            <person name="Scheeler F."/>
            <person name="Shen H."/>
            <person name="Shue B.C."/>
            <person name="Siden-Kiamos I."/>
            <person name="Simpson M."/>
            <person name="Skupski M.P."/>
            <person name="Smith T.J."/>
            <person name="Spier E."/>
            <person name="Spradling A.C."/>
            <person name="Stapleton M."/>
            <person name="Strong R."/>
            <person name="Sun E."/>
            <person name="Svirskas R."/>
            <person name="Tector C."/>
            <person name="Turner R."/>
            <person name="Venter E."/>
            <person name="Wang A.H."/>
            <person name="Wang X."/>
            <person name="Wang Z.-Y."/>
            <person name="Wassarman D.A."/>
            <person name="Weinstock G.M."/>
            <person name="Weissenbach J."/>
            <person name="Williams S.M."/>
            <person name="Woodage T."/>
            <person name="Worley K.C."/>
            <person name="Wu D."/>
            <person name="Yang S."/>
            <person name="Yao Q.A."/>
            <person name="Ye J."/>
            <person name="Yeh R.-F."/>
            <person name="Zaveri J.S."/>
            <person name="Zhan M."/>
            <person name="Zhang G."/>
            <person name="Zhao Q."/>
            <person name="Zheng L."/>
            <person name="Zheng X.H."/>
            <person name="Zhong F.N."/>
            <person name="Zhong W."/>
            <person name="Zhou X."/>
            <person name="Zhu S.C."/>
            <person name="Zhu X."/>
            <person name="Smith H.O."/>
            <person name="Gibbs R.A."/>
            <person name="Myers E.W."/>
            <person name="Rubin G.M."/>
            <person name="Venter J.C."/>
        </authorList>
    </citation>
    <scope>NUCLEOTIDE SEQUENCE [LARGE SCALE GENOMIC DNA]</scope>
    <source>
        <strain>Berkeley</strain>
    </source>
</reference>
<reference key="5">
    <citation type="journal article" date="2002" name="Genome Biol.">
        <title>Annotation of the Drosophila melanogaster euchromatic genome: a systematic review.</title>
        <authorList>
            <person name="Misra S."/>
            <person name="Crosby M.A."/>
            <person name="Mungall C.J."/>
            <person name="Matthews B.B."/>
            <person name="Campbell K.S."/>
            <person name="Hradecky P."/>
            <person name="Huang Y."/>
            <person name="Kaminker J.S."/>
            <person name="Millburn G.H."/>
            <person name="Prochnik S.E."/>
            <person name="Smith C.D."/>
            <person name="Tupy J.L."/>
            <person name="Whitfield E.J."/>
            <person name="Bayraktaroglu L."/>
            <person name="Berman B.P."/>
            <person name="Bettencourt B.R."/>
            <person name="Celniker S.E."/>
            <person name="de Grey A.D.N.J."/>
            <person name="Drysdale R.A."/>
            <person name="Harris N.L."/>
            <person name="Richter J."/>
            <person name="Russo S."/>
            <person name="Schroeder A.J."/>
            <person name="Shu S.Q."/>
            <person name="Stapleton M."/>
            <person name="Yamada C."/>
            <person name="Ashburner M."/>
            <person name="Gelbart W.M."/>
            <person name="Rubin G.M."/>
            <person name="Lewis S.E."/>
        </authorList>
    </citation>
    <scope>GENOME REANNOTATION</scope>
    <source>
        <strain>Berkeley</strain>
    </source>
</reference>
<reference key="6">
    <citation type="journal article" date="2002" name="Genome Biol.">
        <title>A Drosophila full-length cDNA resource.</title>
        <authorList>
            <person name="Stapleton M."/>
            <person name="Carlson J.W."/>
            <person name="Brokstein P."/>
            <person name="Yu C."/>
            <person name="Champe M."/>
            <person name="George R.A."/>
            <person name="Guarin H."/>
            <person name="Kronmiller B."/>
            <person name="Pacleb J.M."/>
            <person name="Park S."/>
            <person name="Wan K.H."/>
            <person name="Rubin G.M."/>
            <person name="Celniker S.E."/>
        </authorList>
    </citation>
    <scope>NUCLEOTIDE SEQUENCE [LARGE SCALE MRNA]</scope>
    <source>
        <strain>Berkeley</strain>
        <tissue>Embryo</tissue>
    </source>
</reference>
<reference key="7">
    <citation type="journal article" date="1996" name="Mol. Cell. Biol.">
        <title>A Drosophila homolog of the Rac- and Cdc42-activated serine/threonine kinase PAK is a potential focal adhesion and focal complex protein that colocalizes with dynamic actin structures.</title>
        <authorList>
            <person name="Harden N."/>
            <person name="Lee J."/>
            <person name="Loh H.Y."/>
            <person name="Ong Y.M."/>
            <person name="Tan I."/>
            <person name="Leung T."/>
            <person name="Manser E."/>
            <person name="Lim L."/>
        </authorList>
    </citation>
    <scope>INTERACTION WITH PAK</scope>
    <source>
        <strain>Canton-S</strain>
        <tissue>Embryo</tissue>
    </source>
</reference>
<reference key="8">
    <citation type="journal article" date="1999" name="Genes Dev.">
        <title>The Drosophila Pkn protein kinase is a Rho/Rac effector target required for dorsal closure during embryogenesis.</title>
        <authorList>
            <person name="Lu Y."/>
            <person name="Settleman J."/>
        </authorList>
    </citation>
    <scope>FUNCTION</scope>
    <scope>INTERACTION WITH PKN</scope>
</reference>
<reference key="9">
    <citation type="journal article" date="2003" name="Neuron">
        <title>CYFIP/Sra-1 controls neuronal connectivity in Drosophila and links the Rac1 GTPase pathway to the fragile X protein.</title>
        <authorList>
            <person name="Schenck A."/>
            <person name="Bardoni B."/>
            <person name="Langmann C."/>
            <person name="Harden N."/>
            <person name="Mandel J.-L."/>
            <person name="Giangrande A."/>
        </authorList>
    </citation>
    <scope>INTERACTION WITH CYFIP</scope>
</reference>
<reference key="10">
    <citation type="journal article" date="2007" name="Genetics">
        <title>A rho-binding protein kinase C-like activity is required for the function of protein kinase N in Drosophila development.</title>
        <authorList>
            <person name="Betson M."/>
            <person name="Settleman J."/>
        </authorList>
    </citation>
    <scope>INTERACTION WITH PKN</scope>
</reference>
<reference key="11">
    <citation type="journal article" date="2012" name="J. Biol. Chem.">
        <title>Independent recognition of Staphylococcus aureus by two receptors for phagocytosis in Drosophila.</title>
        <authorList>
            <person name="Shiratsuchi A."/>
            <person name="Mori T."/>
            <person name="Sakurai K."/>
            <person name="Nagaosa K."/>
            <person name="Sekimizu K."/>
            <person name="Lee B.L."/>
            <person name="Nakanishi Y."/>
        </authorList>
    </citation>
    <scope>FUNCTION</scope>
</reference>
<reference key="12">
    <citation type="journal article" date="2014" name="Cell">
        <title>Mechanical feedback through E-cadherin promotes direction sensing during collective cell migration.</title>
        <authorList>
            <person name="Cai D."/>
            <person name="Chen S.C."/>
            <person name="Prasad M."/>
            <person name="He L."/>
            <person name="Wang X."/>
            <person name="Choesmel-Cadamuro V."/>
            <person name="Sawyer J.K."/>
            <person name="Danuser G."/>
            <person name="Montell D.J."/>
        </authorList>
    </citation>
    <scope>FUNCTION</scope>
    <scope>TISSUE SPECIFICITY</scope>
</reference>